<name>OM24_PASMU</name>
<sequence length="257" mass="28623">MKNKSKLLACCLMALPISSFSIGNNNLIGVGVSAGNSIYQVKKKTAVEPFLMLDLSFGNFYMRGAAGLSELGYQHVFTPSFSTSLFLSPFDGAPIKRKDLKPGYDSIQDRKTQVAVGLGLDYDLSDLFNLPNTNISLEMKKGRRGFNSDITLTRTFMLTDKLSISPSFGLSYYSAKYTNYYFGIKKAELNKTKLKSVYHPKKAYSGHIALNSHYAITDHIGMGLSFSWETYSKAIKKSPIVKRSGEISSALNFYYMF</sequence>
<evidence type="ECO:0000269" key="1">
    <source ref="2"/>
</evidence>
<evidence type="ECO:0000305" key="2"/>
<protein>
    <recommendedName>
        <fullName>24 kDa outer membrane protein</fullName>
    </recommendedName>
</protein>
<keyword id="KW-0998">Cell outer membrane</keyword>
<keyword id="KW-0903">Direct protein sequencing</keyword>
<keyword id="KW-0472">Membrane</keyword>
<keyword id="KW-1185">Reference proteome</keyword>
<keyword id="KW-0732">Signal</keyword>
<organism>
    <name type="scientific">Pasteurella multocida (strain Pm70)</name>
    <dbReference type="NCBI Taxonomy" id="272843"/>
    <lineage>
        <taxon>Bacteria</taxon>
        <taxon>Pseudomonadati</taxon>
        <taxon>Pseudomonadota</taxon>
        <taxon>Gammaproteobacteria</taxon>
        <taxon>Pasteurellales</taxon>
        <taxon>Pasteurellaceae</taxon>
        <taxon>Pasteurella</taxon>
    </lineage>
</organism>
<dbReference type="EMBL" id="AE004439">
    <property type="protein sequence ID" value="AAK03082.1"/>
    <property type="status" value="ALT_INIT"/>
    <property type="molecule type" value="Genomic_DNA"/>
</dbReference>
<dbReference type="RefSeq" id="WP_016533880.1">
    <property type="nucleotide sequence ID" value="NC_002663.1"/>
</dbReference>
<dbReference type="STRING" id="272843.PM0998"/>
<dbReference type="EnsemblBacteria" id="AAK03082">
    <property type="protein sequence ID" value="AAK03082"/>
    <property type="gene ID" value="PM0998"/>
</dbReference>
<dbReference type="KEGG" id="pmu:PM0998"/>
<dbReference type="PATRIC" id="fig|272843.6.peg.1011"/>
<dbReference type="HOGENOM" id="CLU_063465_4_0_6"/>
<dbReference type="OrthoDB" id="5686279at2"/>
<dbReference type="Proteomes" id="UP000000809">
    <property type="component" value="Chromosome"/>
</dbReference>
<dbReference type="GO" id="GO:0009279">
    <property type="term" value="C:cell outer membrane"/>
    <property type="evidence" value="ECO:0007669"/>
    <property type="project" value="UniProtKB-SubCell"/>
</dbReference>
<dbReference type="InterPro" id="IPR010583">
    <property type="entry name" value="MipA"/>
</dbReference>
<dbReference type="PANTHER" id="PTHR38776">
    <property type="entry name" value="MLTA-INTERACTING PROTEIN-RELATED"/>
    <property type="match status" value="1"/>
</dbReference>
<dbReference type="PANTHER" id="PTHR38776:SF1">
    <property type="entry name" value="MLTA-INTERACTING PROTEIN-RELATED"/>
    <property type="match status" value="1"/>
</dbReference>
<dbReference type="Pfam" id="PF06629">
    <property type="entry name" value="MipA"/>
    <property type="match status" value="1"/>
</dbReference>
<feature type="signal peptide" evidence="1">
    <location>
        <begin position="1"/>
        <end position="21"/>
    </location>
</feature>
<feature type="chain" id="PRO_0000019096" description="24 kDa outer membrane protein">
    <location>
        <begin position="22"/>
        <end position="257"/>
    </location>
</feature>
<proteinExistence type="evidence at protein level"/>
<accession>P80604</accession>
<accession>Q9CM45</accession>
<gene>
    <name type="ordered locus">PM0998</name>
</gene>
<comment type="subcellular location">
    <subcellularLocation>
        <location>Cell outer membrane</location>
    </subcellularLocation>
</comment>
<comment type="similarity">
    <text evidence="2">Belongs to the MipA/OmpV family.</text>
</comment>
<comment type="sequence caution" evidence="2">
    <conflict type="erroneous initiation">
        <sequence resource="EMBL-CDS" id="AAK03082"/>
    </conflict>
</comment>
<reference key="1">
    <citation type="journal article" date="2001" name="Proc. Natl. Acad. Sci. U.S.A.">
        <title>Complete genomic sequence of Pasteurella multocida Pm70.</title>
        <authorList>
            <person name="May B.J."/>
            <person name="Zhang Q."/>
            <person name="Li L.L."/>
            <person name="Paustian M.L."/>
            <person name="Whittam T.S."/>
            <person name="Kapur V."/>
        </authorList>
    </citation>
    <scope>NUCLEOTIDE SEQUENCE [LARGE SCALE GENOMIC DNA]</scope>
    <source>
        <strain>Pm70</strain>
    </source>
</reference>
<reference key="2">
    <citation type="submission" date="1996-05" db="UniProtKB">
        <authorList>
            <person name="Hartmann L."/>
        </authorList>
    </citation>
    <scope>PROTEIN SEQUENCE OF 22-45</scope>
    <source>
        <strain>A225</strain>
    </source>
</reference>